<dbReference type="EMBL" id="CP000087">
    <property type="protein sequence ID" value="ABE04694.1"/>
    <property type="molecule type" value="Genomic_DNA"/>
</dbReference>
<dbReference type="RefSeq" id="WP_011477282.1">
    <property type="nucleotide sequence ID" value="NC_007940.1"/>
</dbReference>
<dbReference type="SMR" id="Q1RIX0"/>
<dbReference type="KEGG" id="rbe:RBE_0613"/>
<dbReference type="eggNOG" id="COG0532">
    <property type="taxonomic scope" value="Bacteria"/>
</dbReference>
<dbReference type="HOGENOM" id="CLU_006301_10_2_5"/>
<dbReference type="OrthoDB" id="9811804at2"/>
<dbReference type="Proteomes" id="UP000001951">
    <property type="component" value="Chromosome"/>
</dbReference>
<dbReference type="GO" id="GO:0005737">
    <property type="term" value="C:cytoplasm"/>
    <property type="evidence" value="ECO:0007669"/>
    <property type="project" value="UniProtKB-SubCell"/>
</dbReference>
<dbReference type="GO" id="GO:0005525">
    <property type="term" value="F:GTP binding"/>
    <property type="evidence" value="ECO:0007669"/>
    <property type="project" value="UniProtKB-KW"/>
</dbReference>
<dbReference type="GO" id="GO:0003924">
    <property type="term" value="F:GTPase activity"/>
    <property type="evidence" value="ECO:0007669"/>
    <property type="project" value="UniProtKB-UniRule"/>
</dbReference>
<dbReference type="GO" id="GO:0097216">
    <property type="term" value="F:guanosine tetraphosphate binding"/>
    <property type="evidence" value="ECO:0007669"/>
    <property type="project" value="UniProtKB-ARBA"/>
</dbReference>
<dbReference type="GO" id="GO:0003743">
    <property type="term" value="F:translation initiation factor activity"/>
    <property type="evidence" value="ECO:0007669"/>
    <property type="project" value="UniProtKB-UniRule"/>
</dbReference>
<dbReference type="CDD" id="cd01887">
    <property type="entry name" value="IF2_eIF5B"/>
    <property type="match status" value="1"/>
</dbReference>
<dbReference type="CDD" id="cd03702">
    <property type="entry name" value="IF2_mtIF2_II"/>
    <property type="match status" value="1"/>
</dbReference>
<dbReference type="CDD" id="cd03692">
    <property type="entry name" value="mtIF2_IVc"/>
    <property type="match status" value="1"/>
</dbReference>
<dbReference type="FunFam" id="2.40.30.10:FF:000008">
    <property type="entry name" value="Translation initiation factor IF-2"/>
    <property type="match status" value="1"/>
</dbReference>
<dbReference type="FunFam" id="2.40.30.10:FF:000054">
    <property type="entry name" value="Translation initiation factor IF-2"/>
    <property type="match status" value="1"/>
</dbReference>
<dbReference type="FunFam" id="3.40.50.10050:FF:000001">
    <property type="entry name" value="Translation initiation factor IF-2"/>
    <property type="match status" value="1"/>
</dbReference>
<dbReference type="FunFam" id="3.40.50.300:FF:000019">
    <property type="entry name" value="Translation initiation factor IF-2"/>
    <property type="match status" value="1"/>
</dbReference>
<dbReference type="Gene3D" id="3.40.50.300">
    <property type="entry name" value="P-loop containing nucleotide triphosphate hydrolases"/>
    <property type="match status" value="1"/>
</dbReference>
<dbReference type="Gene3D" id="2.40.30.10">
    <property type="entry name" value="Translation factors"/>
    <property type="match status" value="2"/>
</dbReference>
<dbReference type="Gene3D" id="3.40.50.10050">
    <property type="entry name" value="Translation initiation factor IF- 2, domain 3"/>
    <property type="match status" value="1"/>
</dbReference>
<dbReference type="HAMAP" id="MF_00100_B">
    <property type="entry name" value="IF_2_B"/>
    <property type="match status" value="1"/>
</dbReference>
<dbReference type="InterPro" id="IPR053905">
    <property type="entry name" value="EF-G-like_DII"/>
</dbReference>
<dbReference type="InterPro" id="IPR004161">
    <property type="entry name" value="EFTu-like_2"/>
</dbReference>
<dbReference type="InterPro" id="IPR044145">
    <property type="entry name" value="IF2_II"/>
</dbReference>
<dbReference type="InterPro" id="IPR006847">
    <property type="entry name" value="IF2_N"/>
</dbReference>
<dbReference type="InterPro" id="IPR027417">
    <property type="entry name" value="P-loop_NTPase"/>
</dbReference>
<dbReference type="InterPro" id="IPR005225">
    <property type="entry name" value="Small_GTP-bd"/>
</dbReference>
<dbReference type="InterPro" id="IPR000795">
    <property type="entry name" value="T_Tr_GTP-bd_dom"/>
</dbReference>
<dbReference type="InterPro" id="IPR000178">
    <property type="entry name" value="TF_IF2_bacterial-like"/>
</dbReference>
<dbReference type="InterPro" id="IPR015760">
    <property type="entry name" value="TIF_IF2"/>
</dbReference>
<dbReference type="InterPro" id="IPR023115">
    <property type="entry name" value="TIF_IF2_dom3"/>
</dbReference>
<dbReference type="InterPro" id="IPR036925">
    <property type="entry name" value="TIF_IF2_dom3_sf"/>
</dbReference>
<dbReference type="InterPro" id="IPR009000">
    <property type="entry name" value="Transl_B-barrel_sf"/>
</dbReference>
<dbReference type="NCBIfam" id="TIGR00487">
    <property type="entry name" value="IF-2"/>
    <property type="match status" value="1"/>
</dbReference>
<dbReference type="NCBIfam" id="TIGR00231">
    <property type="entry name" value="small_GTP"/>
    <property type="match status" value="1"/>
</dbReference>
<dbReference type="PANTHER" id="PTHR43381:SF5">
    <property type="entry name" value="TR-TYPE G DOMAIN-CONTAINING PROTEIN"/>
    <property type="match status" value="1"/>
</dbReference>
<dbReference type="PANTHER" id="PTHR43381">
    <property type="entry name" value="TRANSLATION INITIATION FACTOR IF-2-RELATED"/>
    <property type="match status" value="1"/>
</dbReference>
<dbReference type="Pfam" id="PF22042">
    <property type="entry name" value="EF-G_D2"/>
    <property type="match status" value="1"/>
</dbReference>
<dbReference type="Pfam" id="PF00009">
    <property type="entry name" value="GTP_EFTU"/>
    <property type="match status" value="1"/>
</dbReference>
<dbReference type="Pfam" id="PF03144">
    <property type="entry name" value="GTP_EFTU_D2"/>
    <property type="match status" value="1"/>
</dbReference>
<dbReference type="Pfam" id="PF11987">
    <property type="entry name" value="IF-2"/>
    <property type="match status" value="1"/>
</dbReference>
<dbReference type="Pfam" id="PF04760">
    <property type="entry name" value="IF2_N"/>
    <property type="match status" value="1"/>
</dbReference>
<dbReference type="SUPFAM" id="SSF52156">
    <property type="entry name" value="Initiation factor IF2/eIF5b, domain 3"/>
    <property type="match status" value="1"/>
</dbReference>
<dbReference type="SUPFAM" id="SSF52540">
    <property type="entry name" value="P-loop containing nucleoside triphosphate hydrolases"/>
    <property type="match status" value="1"/>
</dbReference>
<dbReference type="SUPFAM" id="SSF50447">
    <property type="entry name" value="Translation proteins"/>
    <property type="match status" value="2"/>
</dbReference>
<dbReference type="PROSITE" id="PS51722">
    <property type="entry name" value="G_TR_2"/>
    <property type="match status" value="1"/>
</dbReference>
<dbReference type="PROSITE" id="PS01176">
    <property type="entry name" value="IF2"/>
    <property type="match status" value="1"/>
</dbReference>
<proteinExistence type="inferred from homology"/>
<feature type="chain" id="PRO_0000277907" description="Translation initiation factor IF-2">
    <location>
        <begin position="1"/>
        <end position="828"/>
    </location>
</feature>
<feature type="domain" description="tr-type G">
    <location>
        <begin position="326"/>
        <end position="496"/>
    </location>
</feature>
<feature type="region of interest" description="Disordered" evidence="3">
    <location>
        <begin position="48"/>
        <end position="76"/>
    </location>
</feature>
<feature type="region of interest" description="Disordered" evidence="3">
    <location>
        <begin position="112"/>
        <end position="137"/>
    </location>
</feature>
<feature type="region of interest" description="G1" evidence="1">
    <location>
        <begin position="335"/>
        <end position="342"/>
    </location>
</feature>
<feature type="region of interest" description="G2" evidence="1">
    <location>
        <begin position="360"/>
        <end position="364"/>
    </location>
</feature>
<feature type="region of interest" description="G3" evidence="1">
    <location>
        <begin position="382"/>
        <end position="385"/>
    </location>
</feature>
<feature type="region of interest" description="G4" evidence="1">
    <location>
        <begin position="436"/>
        <end position="439"/>
    </location>
</feature>
<feature type="region of interest" description="G5" evidence="1">
    <location>
        <begin position="472"/>
        <end position="474"/>
    </location>
</feature>
<feature type="compositionally biased region" description="Polar residues" evidence="3">
    <location>
        <begin position="49"/>
        <end position="58"/>
    </location>
</feature>
<feature type="compositionally biased region" description="Low complexity" evidence="3">
    <location>
        <begin position="65"/>
        <end position="74"/>
    </location>
</feature>
<feature type="compositionally biased region" description="Acidic residues" evidence="3">
    <location>
        <begin position="116"/>
        <end position="126"/>
    </location>
</feature>
<feature type="compositionally biased region" description="Basic and acidic residues" evidence="3">
    <location>
        <begin position="127"/>
        <end position="137"/>
    </location>
</feature>
<feature type="binding site" evidence="2">
    <location>
        <begin position="335"/>
        <end position="342"/>
    </location>
    <ligand>
        <name>GTP</name>
        <dbReference type="ChEBI" id="CHEBI:37565"/>
    </ligand>
</feature>
<feature type="binding site" evidence="2">
    <location>
        <begin position="382"/>
        <end position="386"/>
    </location>
    <ligand>
        <name>GTP</name>
        <dbReference type="ChEBI" id="CHEBI:37565"/>
    </ligand>
</feature>
<feature type="binding site" evidence="2">
    <location>
        <begin position="436"/>
        <end position="439"/>
    </location>
    <ligand>
        <name>GTP</name>
        <dbReference type="ChEBI" id="CHEBI:37565"/>
    </ligand>
</feature>
<reference key="1">
    <citation type="journal article" date="2006" name="PLoS Genet.">
        <title>Genome sequence of Rickettsia bellii illuminates the role of amoebae in gene exchanges between intracellular pathogens.</title>
        <authorList>
            <person name="Ogata H."/>
            <person name="La Scola B."/>
            <person name="Audic S."/>
            <person name="Renesto P."/>
            <person name="Blanc G."/>
            <person name="Robert C."/>
            <person name="Fournier P.-E."/>
            <person name="Claverie J.-M."/>
            <person name="Raoult D."/>
        </authorList>
    </citation>
    <scope>NUCLEOTIDE SEQUENCE [LARGE SCALE GENOMIC DNA]</scope>
    <source>
        <strain>RML369-C</strain>
    </source>
</reference>
<name>IF2_RICBR</name>
<gene>
    <name evidence="2" type="primary">infB</name>
    <name type="ordered locus">RBE_0613</name>
</gene>
<organism>
    <name type="scientific">Rickettsia bellii (strain RML369-C)</name>
    <dbReference type="NCBI Taxonomy" id="336407"/>
    <lineage>
        <taxon>Bacteria</taxon>
        <taxon>Pseudomonadati</taxon>
        <taxon>Pseudomonadota</taxon>
        <taxon>Alphaproteobacteria</taxon>
        <taxon>Rickettsiales</taxon>
        <taxon>Rickettsiaceae</taxon>
        <taxon>Rickettsieae</taxon>
        <taxon>Rickettsia</taxon>
        <taxon>belli group</taxon>
    </lineage>
</organism>
<comment type="function">
    <text evidence="2">One of the essential components for the initiation of protein synthesis. Protects formylmethionyl-tRNA from spontaneous hydrolysis and promotes its binding to the 30S ribosomal subunits. Also involved in the hydrolysis of GTP during the formation of the 70S ribosomal complex.</text>
</comment>
<comment type="subcellular location">
    <subcellularLocation>
        <location evidence="2">Cytoplasm</location>
    </subcellularLocation>
</comment>
<comment type="similarity">
    <text evidence="2">Belongs to the TRAFAC class translation factor GTPase superfamily. Classic translation factor GTPase family. IF-2 subfamily.</text>
</comment>
<evidence type="ECO:0000250" key="1"/>
<evidence type="ECO:0000255" key="2">
    <source>
        <dbReference type="HAMAP-Rule" id="MF_00100"/>
    </source>
</evidence>
<evidence type="ECO:0000256" key="3">
    <source>
        <dbReference type="SAM" id="MobiDB-lite"/>
    </source>
</evidence>
<accession>Q1RIX0</accession>
<sequence>MTDNQENKPKKLTLSNTKLSLNKSFDSLASTQSFVNAKSKTLVEVRKSYSGSTTTLSLNKEKGSLETGSSSGSEEFNRRLSILKKAAEQSKLNDNSQISTLSKLASINQSIASQEDPIEVEQEESSDTNKVKEEPKIEEVKDIEESTLQTPKKKEDIFVKSPLVGTRTRYGIESEKTVDKVTENKVIAPKPKVEESRKFKKTDLFNMVGDDENDNRNRTRSLASIKRAREKEKRKSLVQAPEKVYREITLPEVIGVGDFANAMSERVSDVIKELMKLGILANASQTIDADTAELVATHLGHAVKRVQESDVENILITNDKEEDLRSRAPVVTVMGHVDHGKTSLLDALKSTDVASGETGGITQHIGAYRVTLADGRAITFIDTPGHEAFSEMRSRGAGVTDIVIIVVAADDGIKPQTVEAINHAKAANVPIIVAINKIDKPDIDIERVKNELYMYEIIGEEAGGDVMVIPISALKKINLDKLEEAILLIAEMQNLKASPFGSASGVVIESKIEKGRGALTTMLVQRGTLKSGDIIIAGTAYGKVKKMTNDKGIEVLEATPSVPIEIQGLSHVPHAGDMFNVVQTEKQAKDIAEYRERVAKEKKISIAPRSSLEDLFLKASGSSKIKELPLIIKGDVHGSVEAIAGSLLKLPNDEVKLRILHSGVGPITESDVSLAHASSAIIVGFNVRAGANAKTAAEKEKVEIRYYSIIYDLLDDVKAIMSGMLDPIIREQYIGSVEIRQIFNITKIGKIAGSYVTRGIIKKGAGVRLLRDNIVIHEGKLKTLKRFKEEVKEVREGYECGIAFENYEDIREGDTVEVFELIQEKKQL</sequence>
<protein>
    <recommendedName>
        <fullName evidence="2">Translation initiation factor IF-2</fullName>
    </recommendedName>
</protein>
<keyword id="KW-0963">Cytoplasm</keyword>
<keyword id="KW-0342">GTP-binding</keyword>
<keyword id="KW-0396">Initiation factor</keyword>
<keyword id="KW-0547">Nucleotide-binding</keyword>
<keyword id="KW-0648">Protein biosynthesis</keyword>